<evidence type="ECO:0000250" key="1">
    <source>
        <dbReference type="UniProtKB" id="P01303"/>
    </source>
</evidence>
<evidence type="ECO:0000250" key="2">
    <source>
        <dbReference type="UniProtKB" id="P07808"/>
    </source>
</evidence>
<evidence type="ECO:0000269" key="3">
    <source>
    </source>
</evidence>
<evidence type="ECO:0000305" key="4"/>
<evidence type="ECO:0007829" key="5">
    <source>
        <dbReference type="PDB" id="1F8P"/>
    </source>
</evidence>
<accession>P01304</accession>
<accession>Q9N0M5</accession>
<dbReference type="EMBL" id="AF264083">
    <property type="protein sequence ID" value="AAF72538.1"/>
    <property type="molecule type" value="mRNA"/>
</dbReference>
<dbReference type="PIR" id="A01573">
    <property type="entry name" value="NYPGY"/>
</dbReference>
<dbReference type="PDB" id="1F8P">
    <property type="method" value="NMR"/>
    <property type="chains" value="A=10-45"/>
</dbReference>
<dbReference type="PDB" id="1FVN">
    <property type="method" value="NMR"/>
    <property type="chains" value="A=10-45"/>
</dbReference>
<dbReference type="PDB" id="1ICY">
    <property type="method" value="NMR"/>
    <property type="chains" value="A=10-45"/>
</dbReference>
<dbReference type="PDB" id="1TZ4">
    <property type="method" value="NMR"/>
    <property type="chains" value="A=10-27, A=33-45"/>
</dbReference>
<dbReference type="PDB" id="1TZ5">
    <property type="method" value="NMR"/>
    <property type="chains" value="A=28-32"/>
</dbReference>
<dbReference type="PDBsum" id="1F8P"/>
<dbReference type="PDBsum" id="1FVN"/>
<dbReference type="PDBsum" id="1ICY"/>
<dbReference type="PDBsum" id="1TZ4"/>
<dbReference type="PDBsum" id="1TZ5"/>
<dbReference type="BMRB" id="P01304"/>
<dbReference type="SMR" id="P01304"/>
<dbReference type="STRING" id="9823.ENSSSCP00000041417"/>
<dbReference type="PaxDb" id="9823-ENSSSCP00000017708"/>
<dbReference type="PeptideAtlas" id="P01304"/>
<dbReference type="eggNOG" id="ENOG502S2BU">
    <property type="taxonomic scope" value="Eukaryota"/>
</dbReference>
<dbReference type="HOGENOM" id="CLU_162379_1_0_1"/>
<dbReference type="InParanoid" id="P01304"/>
<dbReference type="EvolutionaryTrace" id="P01304"/>
<dbReference type="Proteomes" id="UP000008227">
    <property type="component" value="Unplaced"/>
</dbReference>
<dbReference type="Proteomes" id="UP000314985">
    <property type="component" value="Unplaced"/>
</dbReference>
<dbReference type="Proteomes" id="UP000694570">
    <property type="component" value="Unplaced"/>
</dbReference>
<dbReference type="Proteomes" id="UP000694571">
    <property type="component" value="Unplaced"/>
</dbReference>
<dbReference type="Proteomes" id="UP000694720">
    <property type="component" value="Unplaced"/>
</dbReference>
<dbReference type="Proteomes" id="UP000694722">
    <property type="component" value="Unplaced"/>
</dbReference>
<dbReference type="Proteomes" id="UP000694723">
    <property type="component" value="Unplaced"/>
</dbReference>
<dbReference type="Proteomes" id="UP000694724">
    <property type="component" value="Unplaced"/>
</dbReference>
<dbReference type="Proteomes" id="UP000694725">
    <property type="component" value="Unplaced"/>
</dbReference>
<dbReference type="Proteomes" id="UP000694726">
    <property type="component" value="Unplaced"/>
</dbReference>
<dbReference type="Proteomes" id="UP000694727">
    <property type="component" value="Unplaced"/>
</dbReference>
<dbReference type="Proteomes" id="UP000694728">
    <property type="component" value="Unplaced"/>
</dbReference>
<dbReference type="GO" id="GO:0005615">
    <property type="term" value="C:extracellular space"/>
    <property type="evidence" value="ECO:0000250"/>
    <property type="project" value="HGNC-UCL"/>
</dbReference>
<dbReference type="GO" id="GO:0098992">
    <property type="term" value="C:neuronal dense core vesicle"/>
    <property type="evidence" value="ECO:0000250"/>
    <property type="project" value="UniProtKB"/>
</dbReference>
<dbReference type="GO" id="GO:0005184">
    <property type="term" value="F:neuropeptide hormone activity"/>
    <property type="evidence" value="ECO:0000318"/>
    <property type="project" value="GO_Central"/>
</dbReference>
<dbReference type="GO" id="GO:0031841">
    <property type="term" value="F:neuropeptide Y receptor binding"/>
    <property type="evidence" value="ECO:0000318"/>
    <property type="project" value="GO_Central"/>
</dbReference>
<dbReference type="GO" id="GO:0008343">
    <property type="term" value="P:adult feeding behavior"/>
    <property type="evidence" value="ECO:0000250"/>
    <property type="project" value="HGNC-UCL"/>
</dbReference>
<dbReference type="GO" id="GO:0007631">
    <property type="term" value="P:feeding behavior"/>
    <property type="evidence" value="ECO:0000318"/>
    <property type="project" value="GO_Central"/>
</dbReference>
<dbReference type="GO" id="GO:0007218">
    <property type="term" value="P:neuropeptide signaling pathway"/>
    <property type="evidence" value="ECO:0000318"/>
    <property type="project" value="GO_Central"/>
</dbReference>
<dbReference type="GO" id="GO:0032100">
    <property type="term" value="P:positive regulation of appetite"/>
    <property type="evidence" value="ECO:0000250"/>
    <property type="project" value="HGNC-UCL"/>
</dbReference>
<dbReference type="CDD" id="cd00126">
    <property type="entry name" value="PAH"/>
    <property type="match status" value="1"/>
</dbReference>
<dbReference type="Gene3D" id="6.10.250.900">
    <property type="match status" value="1"/>
</dbReference>
<dbReference type="InterPro" id="IPR001955">
    <property type="entry name" value="Pancreatic_hormone-like"/>
</dbReference>
<dbReference type="InterPro" id="IPR020392">
    <property type="entry name" value="Pancreatic_hormone-like_CS"/>
</dbReference>
<dbReference type="PANTHER" id="PTHR10533">
    <property type="entry name" value="NEUROPEPTIDE Y/PANCREATIC HORMONE/PEPTIDE YY"/>
    <property type="match status" value="1"/>
</dbReference>
<dbReference type="PANTHER" id="PTHR10533:SF5">
    <property type="entry name" value="PRO-NEUROPEPTIDE Y"/>
    <property type="match status" value="1"/>
</dbReference>
<dbReference type="Pfam" id="PF00159">
    <property type="entry name" value="Hormone_3"/>
    <property type="match status" value="1"/>
</dbReference>
<dbReference type="PRINTS" id="PR00278">
    <property type="entry name" value="PANCHORMONE"/>
</dbReference>
<dbReference type="SMART" id="SM00309">
    <property type="entry name" value="PAH"/>
    <property type="match status" value="1"/>
</dbReference>
<dbReference type="PROSITE" id="PS00265">
    <property type="entry name" value="PANCREATIC_HORMONE_1"/>
    <property type="match status" value="1"/>
</dbReference>
<dbReference type="PROSITE" id="PS50276">
    <property type="entry name" value="PANCREATIC_HORMONE_2"/>
    <property type="match status" value="1"/>
</dbReference>
<proteinExistence type="evidence at protein level"/>
<feature type="signal peptide" evidence="3">
    <location>
        <begin position="1" status="less than"/>
        <end position="9"/>
    </location>
</feature>
<feature type="peptide" id="PRO_0000025327" description="Neuropeptide Y" evidence="3">
    <location>
        <begin position="10"/>
        <end position="45"/>
    </location>
</feature>
<feature type="peptide" id="PRO_0000025328" description="C-flanking peptide of NPY">
    <location>
        <begin position="49"/>
        <end position="76" status="greater than"/>
    </location>
</feature>
<feature type="site" description="Cleavage; by FAP" evidence="1">
    <location>
        <begin position="11"/>
        <end position="12"/>
    </location>
</feature>
<feature type="modified residue" description="Tyrosine amide" evidence="3">
    <location>
        <position position="45"/>
    </location>
</feature>
<feature type="modified residue" description="Phosphothreonine" evidence="1">
    <location>
        <position position="64"/>
    </location>
</feature>
<feature type="non-terminal residue">
    <location>
        <position position="1"/>
    </location>
</feature>
<feature type="non-terminal residue">
    <location>
        <position position="76"/>
    </location>
</feature>
<feature type="turn" evidence="5">
    <location>
        <begin position="22"/>
        <end position="25"/>
    </location>
</feature>
<feature type="helix" evidence="5">
    <location>
        <begin position="26"/>
        <end position="44"/>
    </location>
</feature>
<organism>
    <name type="scientific">Sus scrofa</name>
    <name type="common">Pig</name>
    <dbReference type="NCBI Taxonomy" id="9823"/>
    <lineage>
        <taxon>Eukaryota</taxon>
        <taxon>Metazoa</taxon>
        <taxon>Chordata</taxon>
        <taxon>Craniata</taxon>
        <taxon>Vertebrata</taxon>
        <taxon>Euteleostomi</taxon>
        <taxon>Mammalia</taxon>
        <taxon>Eutheria</taxon>
        <taxon>Laurasiatheria</taxon>
        <taxon>Artiodactyla</taxon>
        <taxon>Suina</taxon>
        <taxon>Suidae</taxon>
        <taxon>Sus</taxon>
    </lineage>
</organism>
<name>NPY_PIG</name>
<gene>
    <name type="primary">NPY</name>
</gene>
<comment type="function">
    <text>NPY is implicated in the control of feeding and in secretion of gonadotrophin-release hormone.</text>
</comment>
<comment type="subcellular location">
    <subcellularLocation>
        <location>Secreted</location>
    </subcellularLocation>
    <subcellularLocation>
        <location evidence="2">Cytoplasmic vesicle</location>
        <location evidence="2">Secretory vesicle</location>
        <location evidence="2">Neuronal dense core vesicle</location>
    </subcellularLocation>
</comment>
<comment type="tissue specificity">
    <text>One of the most abundant peptides in the nervous system. Also found in some chromaffin cells of the adrenal medulla.</text>
</comment>
<comment type="PTM">
    <text evidence="1">The neuropeptide Y form is cleaved at Pro-11 by the prolyl endopeptidase FAP (seprase) activity (in vitro).</text>
</comment>
<comment type="similarity">
    <text evidence="4">Belongs to the NPY family.</text>
</comment>
<sequence length="76" mass="8596">VCLCALAEAYPSKPDNPGEDAPAEDLARYYSALRHYINLITRQRYGKRSSPETLISDLLMREGTENVPRTRLEDPS</sequence>
<keyword id="KW-0002">3D-structure</keyword>
<keyword id="KW-0027">Amidation</keyword>
<keyword id="KW-0165">Cleavage on pair of basic residues</keyword>
<keyword id="KW-0968">Cytoplasmic vesicle</keyword>
<keyword id="KW-0903">Direct protein sequencing</keyword>
<keyword id="KW-0527">Neuropeptide</keyword>
<keyword id="KW-0597">Phosphoprotein</keyword>
<keyword id="KW-1185">Reference proteome</keyword>
<keyword id="KW-0964">Secreted</keyword>
<keyword id="KW-0732">Signal</keyword>
<reference key="1">
    <citation type="submission" date="2000-05" db="EMBL/GenBank/DDBJ databases">
        <authorList>
            <person name="Matteri R.L."/>
        </authorList>
    </citation>
    <scope>NUCLEOTIDE SEQUENCE [MRNA]</scope>
    <source>
        <tissue>Hypothalamus</tissue>
    </source>
</reference>
<reference key="2">
    <citation type="journal article" date="1982" name="Proc. Natl. Acad. Sci. U.S.A.">
        <title>Neuropeptide Y: complete amino acid sequence of the brain peptide.</title>
        <authorList>
            <person name="Tatemoto K."/>
        </authorList>
    </citation>
    <scope>PROTEIN SEQUENCE OF 10-45</scope>
    <scope>AMIDATION AT TYR-45</scope>
</reference>
<reference key="3">
    <citation type="journal article" date="1990" name="Biochemistry">
        <title>Sequence-specific 1H NMR assignment and secondary structure of neuropeptide Y in aqueous solution.</title>
        <authorList>
            <person name="Saudek V."/>
            <person name="Pelton J.T."/>
        </authorList>
    </citation>
    <scope>STRUCTURE BY NMR OF 10-45</scope>
</reference>
<reference key="4">
    <citation type="journal article" date="1992" name="Eur. J. Biochem.">
        <title>Structure of neuropeptide Y dimer in solution.</title>
        <authorList>
            <person name="Cowley D.J."/>
            <person name="Hoflack J.M."/>
            <person name="Pelton J.T."/>
            <person name="Saudek V."/>
        </authorList>
    </citation>
    <scope>STRUCTURE BY NMR OF 10-45</scope>
</reference>
<protein>
    <recommendedName>
        <fullName>Pro-neuropeptide Y</fullName>
    </recommendedName>
    <component>
        <recommendedName>
            <fullName>Neuropeptide Y</fullName>
        </recommendedName>
        <alternativeName>
            <fullName>Neuropeptide tyrosine</fullName>
            <shortName>NPY</shortName>
        </alternativeName>
    </component>
    <component>
        <recommendedName>
            <fullName>C-flanking peptide of NPY</fullName>
            <shortName>CPON</shortName>
        </recommendedName>
    </component>
</protein>